<keyword id="KW-0687">Ribonucleoprotein</keyword>
<keyword id="KW-0689">Ribosomal protein</keyword>
<keyword id="KW-0694">RNA-binding</keyword>
<keyword id="KW-0699">rRNA-binding</keyword>
<dbReference type="EMBL" id="FM209186">
    <property type="protein sequence ID" value="CAW25401.1"/>
    <property type="molecule type" value="Genomic_DNA"/>
</dbReference>
<dbReference type="RefSeq" id="WP_003093717.1">
    <property type="nucleotide sequence ID" value="NC_011770.1"/>
</dbReference>
<dbReference type="SMR" id="B7V653"/>
<dbReference type="GeneID" id="77219207"/>
<dbReference type="KEGG" id="pag:PLES_06741"/>
<dbReference type="HOGENOM" id="CLU_073626_1_1_6"/>
<dbReference type="GO" id="GO:0022627">
    <property type="term" value="C:cytosolic small ribosomal subunit"/>
    <property type="evidence" value="ECO:0007669"/>
    <property type="project" value="TreeGrafter"/>
</dbReference>
<dbReference type="GO" id="GO:0019843">
    <property type="term" value="F:rRNA binding"/>
    <property type="evidence" value="ECO:0007669"/>
    <property type="project" value="UniProtKB-UniRule"/>
</dbReference>
<dbReference type="GO" id="GO:0003735">
    <property type="term" value="F:structural constituent of ribosome"/>
    <property type="evidence" value="ECO:0007669"/>
    <property type="project" value="InterPro"/>
</dbReference>
<dbReference type="GO" id="GO:0006412">
    <property type="term" value="P:translation"/>
    <property type="evidence" value="ECO:0007669"/>
    <property type="project" value="UniProtKB-UniRule"/>
</dbReference>
<dbReference type="CDD" id="cd00364">
    <property type="entry name" value="Ribosomal_uS17"/>
    <property type="match status" value="1"/>
</dbReference>
<dbReference type="FunFam" id="2.40.50.140:FF:000014">
    <property type="entry name" value="30S ribosomal protein S17"/>
    <property type="match status" value="1"/>
</dbReference>
<dbReference type="Gene3D" id="2.40.50.140">
    <property type="entry name" value="Nucleic acid-binding proteins"/>
    <property type="match status" value="1"/>
</dbReference>
<dbReference type="HAMAP" id="MF_01345_B">
    <property type="entry name" value="Ribosomal_uS17_B"/>
    <property type="match status" value="1"/>
</dbReference>
<dbReference type="InterPro" id="IPR012340">
    <property type="entry name" value="NA-bd_OB-fold"/>
</dbReference>
<dbReference type="InterPro" id="IPR000266">
    <property type="entry name" value="Ribosomal_uS17"/>
</dbReference>
<dbReference type="InterPro" id="IPR019984">
    <property type="entry name" value="Ribosomal_uS17_bact/chlr"/>
</dbReference>
<dbReference type="NCBIfam" id="NF004123">
    <property type="entry name" value="PRK05610.1"/>
    <property type="match status" value="1"/>
</dbReference>
<dbReference type="NCBIfam" id="TIGR03635">
    <property type="entry name" value="uS17_bact"/>
    <property type="match status" value="1"/>
</dbReference>
<dbReference type="PANTHER" id="PTHR10744">
    <property type="entry name" value="40S RIBOSOMAL PROTEIN S11 FAMILY MEMBER"/>
    <property type="match status" value="1"/>
</dbReference>
<dbReference type="PANTHER" id="PTHR10744:SF1">
    <property type="entry name" value="SMALL RIBOSOMAL SUBUNIT PROTEIN US17M"/>
    <property type="match status" value="1"/>
</dbReference>
<dbReference type="Pfam" id="PF00366">
    <property type="entry name" value="Ribosomal_S17"/>
    <property type="match status" value="1"/>
</dbReference>
<dbReference type="PRINTS" id="PR00973">
    <property type="entry name" value="RIBOSOMALS17"/>
</dbReference>
<dbReference type="SUPFAM" id="SSF50249">
    <property type="entry name" value="Nucleic acid-binding proteins"/>
    <property type="match status" value="1"/>
</dbReference>
<evidence type="ECO:0000255" key="1">
    <source>
        <dbReference type="HAMAP-Rule" id="MF_01345"/>
    </source>
</evidence>
<evidence type="ECO:0000305" key="2"/>
<organism>
    <name type="scientific">Pseudomonas aeruginosa (strain LESB58)</name>
    <dbReference type="NCBI Taxonomy" id="557722"/>
    <lineage>
        <taxon>Bacteria</taxon>
        <taxon>Pseudomonadati</taxon>
        <taxon>Pseudomonadota</taxon>
        <taxon>Gammaproteobacteria</taxon>
        <taxon>Pseudomonadales</taxon>
        <taxon>Pseudomonadaceae</taxon>
        <taxon>Pseudomonas</taxon>
    </lineage>
</organism>
<proteinExistence type="inferred from homology"/>
<feature type="chain" id="PRO_1000143287" description="Small ribosomal subunit protein uS17">
    <location>
        <begin position="1"/>
        <end position="88"/>
    </location>
</feature>
<accession>B7V653</accession>
<reference key="1">
    <citation type="journal article" date="2009" name="Genome Res.">
        <title>Newly introduced genomic prophage islands are critical determinants of in vivo competitiveness in the Liverpool epidemic strain of Pseudomonas aeruginosa.</title>
        <authorList>
            <person name="Winstanley C."/>
            <person name="Langille M.G.I."/>
            <person name="Fothergill J.L."/>
            <person name="Kukavica-Ibrulj I."/>
            <person name="Paradis-Bleau C."/>
            <person name="Sanschagrin F."/>
            <person name="Thomson N.R."/>
            <person name="Winsor G.L."/>
            <person name="Quail M.A."/>
            <person name="Lennard N."/>
            <person name="Bignell A."/>
            <person name="Clarke L."/>
            <person name="Seeger K."/>
            <person name="Saunders D."/>
            <person name="Harris D."/>
            <person name="Parkhill J."/>
            <person name="Hancock R.E.W."/>
            <person name="Brinkman F.S.L."/>
            <person name="Levesque R.C."/>
        </authorList>
    </citation>
    <scope>NUCLEOTIDE SEQUENCE [LARGE SCALE GENOMIC DNA]</scope>
    <source>
        <strain>LESB58</strain>
    </source>
</reference>
<gene>
    <name evidence="1" type="primary">rpsQ</name>
    <name type="ordered locus">PLES_06741</name>
</gene>
<name>RS17_PSEA8</name>
<comment type="function">
    <text evidence="1">One of the primary rRNA binding proteins, it binds specifically to the 5'-end of 16S ribosomal RNA.</text>
</comment>
<comment type="subunit">
    <text evidence="1">Part of the 30S ribosomal subunit.</text>
</comment>
<comment type="similarity">
    <text evidence="1">Belongs to the universal ribosomal protein uS17 family.</text>
</comment>
<sequence>MAEAQKTVRTLTGRVVSDKMDKTVTVLIERRVKHPIYGKYVKRSTKLHAHDESNQCRIGDLVTIRETRPLAKTKAWTLVDIVERAVEV</sequence>
<protein>
    <recommendedName>
        <fullName evidence="1">Small ribosomal subunit protein uS17</fullName>
    </recommendedName>
    <alternativeName>
        <fullName evidence="2">30S ribosomal protein S17</fullName>
    </alternativeName>
</protein>